<name>TXC04_LYCSI</name>
<feature type="signal peptide" evidence="2">
    <location>
        <begin position="1"/>
        <end position="18"/>
    </location>
</feature>
<feature type="propeptide" id="PRO_0000401851" evidence="1">
    <location>
        <begin position="19"/>
        <end position="38"/>
    </location>
</feature>
<feature type="chain" id="PRO_0000401852" description="U12-lycotoxin-Ls1d">
    <location>
        <begin position="39"/>
        <end position="93"/>
    </location>
</feature>
<protein>
    <recommendedName>
        <fullName>U12-lycotoxin-Ls1d</fullName>
    </recommendedName>
    <alternativeName>
        <fullName>Toxin-like structure LSTX-K4</fullName>
    </alternativeName>
</protein>
<accession>B6DD16</accession>
<proteinExistence type="evidence at transcript level"/>
<keyword id="KW-1015">Disulfide bond</keyword>
<keyword id="KW-0964">Secreted</keyword>
<keyword id="KW-0732">Signal</keyword>
<keyword id="KW-0800">Toxin</keyword>
<comment type="subcellular location">
    <subcellularLocation>
        <location evidence="1">Secreted</location>
    </subcellularLocation>
</comment>
<comment type="tissue specificity">
    <text>Expressed by the venom gland.</text>
</comment>
<comment type="PTM">
    <text evidence="3">Contains 5 disulfide bonds.</text>
</comment>
<comment type="similarity">
    <text evidence="3">Belongs to the neurotoxin 31 family.</text>
</comment>
<organism>
    <name type="scientific">Lycosa singoriensis</name>
    <name type="common">Wolf spider</name>
    <name type="synonym">Aranea singoriensis</name>
    <dbReference type="NCBI Taxonomy" id="434756"/>
    <lineage>
        <taxon>Eukaryota</taxon>
        <taxon>Metazoa</taxon>
        <taxon>Ecdysozoa</taxon>
        <taxon>Arthropoda</taxon>
        <taxon>Chelicerata</taxon>
        <taxon>Arachnida</taxon>
        <taxon>Araneae</taxon>
        <taxon>Araneomorphae</taxon>
        <taxon>Entelegynae</taxon>
        <taxon>Lycosoidea</taxon>
        <taxon>Lycosidae</taxon>
        <taxon>Lycosa</taxon>
    </lineage>
</organism>
<sequence length="93" mass="10210">MKFAVILLFSLVVLAVASESVEEVRREIDIEDLPEQQRGCADLRQPCTEGDDCSCCGSEGVCNCSHPHKKGCYCKTAGLLEKLAKKFKGCKNK</sequence>
<reference key="1">
    <citation type="journal article" date="2010" name="Zoology">
        <title>Transcriptome analysis of the venom glands of the Chinese wolf spider Lycosa singoriensis.</title>
        <authorList>
            <person name="Zhang Y."/>
            <person name="Chen J."/>
            <person name="Tang X."/>
            <person name="Wang F."/>
            <person name="Jiang L."/>
            <person name="Xiong X."/>
            <person name="Wang M."/>
            <person name="Rong M."/>
            <person name="Liu Z."/>
            <person name="Liang S."/>
        </authorList>
    </citation>
    <scope>NUCLEOTIDE SEQUENCE [LARGE SCALE MRNA]</scope>
    <source>
        <tissue>Venom gland</tissue>
    </source>
</reference>
<dbReference type="EMBL" id="EU926100">
    <property type="protein sequence ID" value="ACI41432.1"/>
    <property type="molecule type" value="mRNA"/>
</dbReference>
<dbReference type="EMBL" id="FM864104">
    <property type="protein sequence ID" value="CAS03701.1"/>
    <property type="molecule type" value="mRNA"/>
</dbReference>
<dbReference type="SMR" id="B6DD16"/>
<dbReference type="ArachnoServer" id="AS001039">
    <property type="toxin name" value="U12-lycotoxin-Ls1d"/>
</dbReference>
<dbReference type="GO" id="GO:0005576">
    <property type="term" value="C:extracellular region"/>
    <property type="evidence" value="ECO:0007669"/>
    <property type="project" value="UniProtKB-SubCell"/>
</dbReference>
<dbReference type="GO" id="GO:0090729">
    <property type="term" value="F:toxin activity"/>
    <property type="evidence" value="ECO:0007669"/>
    <property type="project" value="UniProtKB-KW"/>
</dbReference>
<evidence type="ECO:0000250" key="1"/>
<evidence type="ECO:0000255" key="2"/>
<evidence type="ECO:0000305" key="3"/>